<sequence length="723" mass="80944">MAKTPIPFTTLNDLPDVILSNIIAAVSDTRSRNATALVCHKWLVLERSTRTSLTLRGNIRDLFMLPTCFRSITYLDLSLISPWGHPLLASRATDAPDNDSALIAHLLRHTFPSVTSLTLYARDPNTIQFLPAQWAHTLKHIKLVRWHQRAQLASGDELNLLFIGTPQITSLDLSNFYCWTDDVPPALQSNPNVACNLTRFNLLNASFPEGFKTDEIKVITKCCPNLKEFKVACMFDPRYIGFIGDEALVCLATNCPKLSVLHLADTSVLSNCRGDPNDEGFTVEDAQFSVSTLIEVFSGLSLLEELVFDVCNNVRDSGPALEILKTKCPKLRSLKLGQFHGISMPIESKLDGVALCQGLLSLSIRSVGDLDDMGLIGIGRGCSRLTKFEIECCKKITMRGMRTLASLLRKSLVDVTISCCKNLGASSSLKALEPIQDRIQRLHIDCVWDTVEEFENLDGVEYGFDLNEASGGEASSNPAGFGDTFGSMDDDLMNNRNKRCKYSYDLNSVYVENNGHGNGFCGRTWDRLQYLSLWIGVGELLTPLAAAGLQDCPKLEEIKIKVEGDCRLWSKPSERAFGLSTLIQYPKLVKMHLDCGDIIGYAHTAPSGQMDLSLWERFYLMGIRHLNLRELDYWPPQDRDVNQRSLSLPAAGLLQECVTLRKLFIHGTAHEHFMMFLLRIPNLRDVQLREDYYPAPENDMSTEMRADSLSRFEVALNRRQICD</sequence>
<comment type="function">
    <text evidence="1 7">Component of SCF(ASK-cullin-F-box) E3 ubiquitin ligase complexes, which may mediate the ubiquitination and subsequent proteasomal degradation of target proteins (By similarity). Is necessary for responses to strigolactones and may be involved in the ubiquitin-mediated degradation of specific proteins that activate axillary growth (By similarity). Targets probably SMAX1A to degradation upon the formation of an E3 SCF ubiquitin ligase complex (ASK-cullin-F-box) containing MAX2B and KAI2IA in response to (-)-germacrene D in the stigma (Probable).</text>
</comment>
<comment type="subunit">
    <text evidence="1 4">Part of a putative SCF (SKP1/Cullin/F-box) ubiquitin ligase complex (By similarity). Interacts with KAI2IA in the presence of (-)-germacrene D (PubMed:38513014).</text>
</comment>
<comment type="subcellular location">
    <subcellularLocation>
        <location evidence="4">Nucleus</location>
    </subcellularLocation>
    <subcellularLocation>
        <location evidence="4">Cytoplasm</location>
    </subcellularLocation>
</comment>
<comment type="tissue specificity">
    <text evidence="3">Mainly expressed in fully expanded leaves, lateral roots, axillary and shoot apex, and, to a lower extent, in internodes and nodes.</text>
</comment>
<comment type="developmental stage">
    <text evidence="3">Almost constant levels during plant life.</text>
</comment>
<accession>I1SSI6</accession>
<reference key="1">
    <citation type="journal article" date="2011" name="Front. Plant Sci.">
        <title>The expression of Petunia strigolactone pathway genes is altered as part of the endogenous developmental program.</title>
        <authorList>
            <person name="Drummond R.S.M."/>
            <person name="Sheehan H."/>
            <person name="Simons J.L."/>
            <person name="Martinez-Sanchez N.M."/>
            <person name="Turner R.M."/>
            <person name="Putterill J."/>
            <person name="Snowden K.C."/>
        </authorList>
    </citation>
    <scope>NUCLEOTIDE SEQUENCE [GENOMIC DNA]</scope>
    <scope>TISSUE SPECIFICITY</scope>
    <scope>DEVELOPMENTAL STAGE</scope>
    <source>
        <strain>cv. Violet 26</strain>
    </source>
</reference>
<reference key="2">
    <citation type="journal article" date="2024" name="Science">
        <title>Volatile communication in plants relies on a KAI2-mediated signaling pathway.</title>
        <authorList>
            <person name="Stirling S.A."/>
            <person name="Guercio A.M."/>
            <person name="Partrick R.M."/>
            <person name="Huang X.-Q."/>
            <person name="Bergman M.E."/>
            <person name="Dwivedi V."/>
            <person name="Kortbeek R.W.J."/>
            <person name="Liu Y.-K."/>
            <person name="Sun F."/>
            <person name="Tao W.A."/>
            <person name="Li Y."/>
            <person name="Boachon B."/>
            <person name="Shabek N."/>
            <person name="Dudareva N."/>
        </authorList>
    </citation>
    <scope>TISSUE SPECIFICITY</scope>
    <scope>SUBCELLULAR LOCATION</scope>
    <scope>INTERACTION WITH KAI2IA</scope>
    <source>
        <strain>cv. Mitchell</strain>
    </source>
</reference>
<keyword id="KW-0963">Cytoplasm</keyword>
<keyword id="KW-0539">Nucleus</keyword>
<keyword id="KW-0833">Ubl conjugation pathway</keyword>
<evidence type="ECO:0000250" key="1">
    <source>
        <dbReference type="UniProtKB" id="Q9SIM9"/>
    </source>
</evidence>
<evidence type="ECO:0000255" key="2"/>
<evidence type="ECO:0000269" key="3">
    <source>
    </source>
</evidence>
<evidence type="ECO:0000269" key="4">
    <source>
    </source>
</evidence>
<evidence type="ECO:0000303" key="5">
    <source>
    </source>
</evidence>
<evidence type="ECO:0000303" key="6">
    <source>
    </source>
</evidence>
<evidence type="ECO:0000305" key="7">
    <source>
    </source>
</evidence>
<organism>
    <name type="scientific">Petunia hybrida</name>
    <name type="common">Petunia</name>
    <dbReference type="NCBI Taxonomy" id="4102"/>
    <lineage>
        <taxon>Eukaryota</taxon>
        <taxon>Viridiplantae</taxon>
        <taxon>Streptophyta</taxon>
        <taxon>Embryophyta</taxon>
        <taxon>Tracheophyta</taxon>
        <taxon>Spermatophyta</taxon>
        <taxon>Magnoliopsida</taxon>
        <taxon>eudicotyledons</taxon>
        <taxon>Gunneridae</taxon>
        <taxon>Pentapetalae</taxon>
        <taxon>asterids</taxon>
        <taxon>lamiids</taxon>
        <taxon>Solanales</taxon>
        <taxon>Solanaceae</taxon>
        <taxon>Petunioideae</taxon>
        <taxon>Petunia</taxon>
    </lineage>
</organism>
<feature type="chain" id="PRO_0000461710" description="F-box protein MAX2 homolog B">
    <location>
        <begin position="1"/>
        <end position="723"/>
    </location>
</feature>
<feature type="domain" description="F-box" evidence="2">
    <location>
        <begin position="2"/>
        <end position="55"/>
    </location>
</feature>
<name>MAX2B_PETHY</name>
<protein>
    <recommendedName>
        <fullName evidence="5 6">F-box protein MAX2 homolog B</fullName>
        <shortName evidence="5 6">PhMAX2B</shortName>
    </recommendedName>
</protein>
<proteinExistence type="evidence at protein level"/>
<dbReference type="EMBL" id="HM117630">
    <property type="protein sequence ID" value="AEB97385.1"/>
    <property type="molecule type" value="Genomic_DNA"/>
</dbReference>
<dbReference type="GO" id="GO:0005737">
    <property type="term" value="C:cytoplasm"/>
    <property type="evidence" value="ECO:0000314"/>
    <property type="project" value="UniProtKB"/>
</dbReference>
<dbReference type="GO" id="GO:0005634">
    <property type="term" value="C:nucleus"/>
    <property type="evidence" value="ECO:0000314"/>
    <property type="project" value="UniProtKB"/>
</dbReference>
<dbReference type="GO" id="GO:0019005">
    <property type="term" value="C:SCF ubiquitin ligase complex"/>
    <property type="evidence" value="ECO:0007669"/>
    <property type="project" value="TreeGrafter"/>
</dbReference>
<dbReference type="GO" id="GO:0031146">
    <property type="term" value="P:SCF-dependent proteasomal ubiquitin-dependent protein catabolic process"/>
    <property type="evidence" value="ECO:0007669"/>
    <property type="project" value="TreeGrafter"/>
</dbReference>
<dbReference type="CDD" id="cd22159">
    <property type="entry name" value="F-box_AtTIR1-like"/>
    <property type="match status" value="1"/>
</dbReference>
<dbReference type="FunFam" id="1.20.1280.50:FF:000023">
    <property type="entry name" value="F-box/LRR-repeat protein 4"/>
    <property type="match status" value="1"/>
</dbReference>
<dbReference type="Gene3D" id="1.20.1280.50">
    <property type="match status" value="1"/>
</dbReference>
<dbReference type="Gene3D" id="3.80.10.10">
    <property type="entry name" value="Ribonuclease Inhibitor"/>
    <property type="match status" value="1"/>
</dbReference>
<dbReference type="InterPro" id="IPR041567">
    <property type="entry name" value="COI1_F-box"/>
</dbReference>
<dbReference type="InterPro" id="IPR006553">
    <property type="entry name" value="Leu-rich_rpt_Cys-con_subtyp"/>
</dbReference>
<dbReference type="InterPro" id="IPR032675">
    <property type="entry name" value="LRR_dom_sf"/>
</dbReference>
<dbReference type="PANTHER" id="PTHR13318:SF267">
    <property type="entry name" value="F-BOX_LRR-REPEAT MAX2 HOMOLOG A-LIKE"/>
    <property type="match status" value="1"/>
</dbReference>
<dbReference type="PANTHER" id="PTHR13318">
    <property type="entry name" value="PARTNER OF PAIRED, ISOFORM B-RELATED"/>
    <property type="match status" value="1"/>
</dbReference>
<dbReference type="Pfam" id="PF18511">
    <property type="entry name" value="F-box_5"/>
    <property type="match status" value="1"/>
</dbReference>
<dbReference type="SMART" id="SM00367">
    <property type="entry name" value="LRR_CC"/>
    <property type="match status" value="3"/>
</dbReference>
<dbReference type="SUPFAM" id="SSF52047">
    <property type="entry name" value="RNI-like"/>
    <property type="match status" value="1"/>
</dbReference>
<gene>
    <name evidence="6" type="primary">MAX2B</name>
</gene>